<proteinExistence type="inferred from homology"/>
<comment type="function">
    <text evidence="1">NDH-1 shuttles electrons from NADH, via FMN and iron-sulfur (Fe-S) centers, to quinones in the respiratory chain. The immediate electron acceptor for the enzyme in this species is believed to be a menaquinone. Couples the redox reaction to proton translocation (for every two electrons transferred, four hydrogen ions are translocated across the cytoplasmic membrane), and thus conserves the redox energy in a proton gradient.</text>
</comment>
<comment type="catalytic activity">
    <reaction evidence="1">
        <text>a quinone + NADH + 5 H(+)(in) = a quinol + NAD(+) + 4 H(+)(out)</text>
        <dbReference type="Rhea" id="RHEA:57888"/>
        <dbReference type="ChEBI" id="CHEBI:15378"/>
        <dbReference type="ChEBI" id="CHEBI:24646"/>
        <dbReference type="ChEBI" id="CHEBI:57540"/>
        <dbReference type="ChEBI" id="CHEBI:57945"/>
        <dbReference type="ChEBI" id="CHEBI:132124"/>
    </reaction>
</comment>
<comment type="subunit">
    <text evidence="1">NDH-1 is composed of 14 different subunits. Subunits NuoA, H, J, K, L, M, N constitute the membrane sector of the complex.</text>
</comment>
<comment type="subcellular location">
    <subcellularLocation>
        <location evidence="1">Cell membrane</location>
        <topology evidence="1">Multi-pass membrane protein</topology>
    </subcellularLocation>
</comment>
<comment type="similarity">
    <text evidence="1">Belongs to the complex I subunit 3 family.</text>
</comment>
<accession>B0TH77</accession>
<keyword id="KW-1003">Cell membrane</keyword>
<keyword id="KW-0472">Membrane</keyword>
<keyword id="KW-0520">NAD</keyword>
<keyword id="KW-0874">Quinone</keyword>
<keyword id="KW-1185">Reference proteome</keyword>
<keyword id="KW-1278">Translocase</keyword>
<keyword id="KW-0812">Transmembrane</keyword>
<keyword id="KW-1133">Transmembrane helix</keyword>
<keyword id="KW-0813">Transport</keyword>
<feature type="chain" id="PRO_0000362699" description="NADH-quinone oxidoreductase subunit A">
    <location>
        <begin position="1"/>
        <end position="118"/>
    </location>
</feature>
<feature type="transmembrane region" description="Helical" evidence="1">
    <location>
        <begin position="5"/>
        <end position="25"/>
    </location>
</feature>
<feature type="transmembrane region" description="Helical" evidence="1">
    <location>
        <begin position="61"/>
        <end position="81"/>
    </location>
</feature>
<feature type="transmembrane region" description="Helical" evidence="1">
    <location>
        <begin position="90"/>
        <end position="110"/>
    </location>
</feature>
<organism>
    <name type="scientific">Heliobacterium modesticaldum (strain ATCC 51547 / Ice1)</name>
    <dbReference type="NCBI Taxonomy" id="498761"/>
    <lineage>
        <taxon>Bacteria</taxon>
        <taxon>Bacillati</taxon>
        <taxon>Bacillota</taxon>
        <taxon>Clostridia</taxon>
        <taxon>Eubacteriales</taxon>
        <taxon>Heliobacteriaceae</taxon>
        <taxon>Heliomicrobium</taxon>
    </lineage>
</organism>
<reference key="1">
    <citation type="journal article" date="2008" name="J. Bacteriol.">
        <title>The genome of Heliobacterium modesticaldum, a phototrophic representative of the Firmicutes containing the simplest photosynthetic apparatus.</title>
        <authorList>
            <person name="Sattley W.M."/>
            <person name="Madigan M.T."/>
            <person name="Swingley W.D."/>
            <person name="Cheung P.C."/>
            <person name="Clocksin K.M."/>
            <person name="Conrad A.L."/>
            <person name="Dejesa L.C."/>
            <person name="Honchak B.M."/>
            <person name="Jung D.O."/>
            <person name="Karbach L.E."/>
            <person name="Kurdoglu A."/>
            <person name="Lahiri S."/>
            <person name="Mastrian S.D."/>
            <person name="Page L.E."/>
            <person name="Taylor H.L."/>
            <person name="Wang Z.T."/>
            <person name="Raymond J."/>
            <person name="Chen M."/>
            <person name="Blankenship R.E."/>
            <person name="Touchman J.W."/>
        </authorList>
    </citation>
    <scope>NUCLEOTIDE SEQUENCE [LARGE SCALE GENOMIC DNA]</scope>
    <source>
        <strain>ATCC 51547 / Ice1</strain>
    </source>
</reference>
<sequence length="118" mass="13672">MLKEYLGISLFLAAGLIIPFLAFAVSRLLQTRKNSLVKGEPYECGMETIGDTWIQFKSNYFLYALVFVAFDVETVFLYPWAVKFQQLGTFAIVEMFIFITILVVGFWYAWKEGALEWK</sequence>
<gene>
    <name evidence="1" type="primary">nuoA</name>
    <name type="ordered locus">Helmi_21270</name>
    <name type="ORF">HM1_2196</name>
</gene>
<name>NUOA_HELMI</name>
<dbReference type="EC" id="7.1.1.-" evidence="1"/>
<dbReference type="EMBL" id="CP000930">
    <property type="protein sequence ID" value="ABZ84752.1"/>
    <property type="molecule type" value="Genomic_DNA"/>
</dbReference>
<dbReference type="RefSeq" id="WP_012283252.1">
    <property type="nucleotide sequence ID" value="NC_010337.2"/>
</dbReference>
<dbReference type="SMR" id="B0TH77"/>
<dbReference type="STRING" id="498761.HM1_2196"/>
<dbReference type="KEGG" id="hmo:HM1_2196"/>
<dbReference type="eggNOG" id="COG0838">
    <property type="taxonomic scope" value="Bacteria"/>
</dbReference>
<dbReference type="HOGENOM" id="CLU_119549_1_2_9"/>
<dbReference type="OrthoDB" id="9791970at2"/>
<dbReference type="Proteomes" id="UP000008550">
    <property type="component" value="Chromosome"/>
</dbReference>
<dbReference type="GO" id="GO:0030964">
    <property type="term" value="C:NADH dehydrogenase complex"/>
    <property type="evidence" value="ECO:0007669"/>
    <property type="project" value="TreeGrafter"/>
</dbReference>
<dbReference type="GO" id="GO:0005886">
    <property type="term" value="C:plasma membrane"/>
    <property type="evidence" value="ECO:0007669"/>
    <property type="project" value="UniProtKB-SubCell"/>
</dbReference>
<dbReference type="GO" id="GO:0008137">
    <property type="term" value="F:NADH dehydrogenase (ubiquinone) activity"/>
    <property type="evidence" value="ECO:0007669"/>
    <property type="project" value="InterPro"/>
</dbReference>
<dbReference type="GO" id="GO:0050136">
    <property type="term" value="F:NADH:ubiquinone reductase (non-electrogenic) activity"/>
    <property type="evidence" value="ECO:0007669"/>
    <property type="project" value="UniProtKB-UniRule"/>
</dbReference>
<dbReference type="GO" id="GO:0048038">
    <property type="term" value="F:quinone binding"/>
    <property type="evidence" value="ECO:0007669"/>
    <property type="project" value="UniProtKB-KW"/>
</dbReference>
<dbReference type="Gene3D" id="1.20.58.1610">
    <property type="entry name" value="NADH:ubiquinone/plastoquinone oxidoreductase, chain 3"/>
    <property type="match status" value="1"/>
</dbReference>
<dbReference type="HAMAP" id="MF_01394">
    <property type="entry name" value="NDH1_NuoA"/>
    <property type="match status" value="1"/>
</dbReference>
<dbReference type="InterPro" id="IPR023043">
    <property type="entry name" value="NAD(P)H_OxRDtase_bac/plastid"/>
</dbReference>
<dbReference type="InterPro" id="IPR000440">
    <property type="entry name" value="NADH_UbQ/plastoQ_OxRdtase_su3"/>
</dbReference>
<dbReference type="InterPro" id="IPR038430">
    <property type="entry name" value="NDAH_ubi_oxred_su3_sf"/>
</dbReference>
<dbReference type="PANTHER" id="PTHR11058">
    <property type="entry name" value="NADH-UBIQUINONE OXIDOREDUCTASE CHAIN 3"/>
    <property type="match status" value="1"/>
</dbReference>
<dbReference type="PANTHER" id="PTHR11058:SF9">
    <property type="entry name" value="NADH-UBIQUINONE OXIDOREDUCTASE CHAIN 3"/>
    <property type="match status" value="1"/>
</dbReference>
<dbReference type="Pfam" id="PF00507">
    <property type="entry name" value="Oxidored_q4"/>
    <property type="match status" value="1"/>
</dbReference>
<protein>
    <recommendedName>
        <fullName evidence="1">NADH-quinone oxidoreductase subunit A</fullName>
        <ecNumber evidence="1">7.1.1.-</ecNumber>
    </recommendedName>
    <alternativeName>
        <fullName evidence="1">NADH dehydrogenase I subunit A</fullName>
    </alternativeName>
    <alternativeName>
        <fullName evidence="1">NDH-1 subunit A</fullName>
    </alternativeName>
    <alternativeName>
        <fullName evidence="1">NUO1</fullName>
    </alternativeName>
</protein>
<evidence type="ECO:0000255" key="1">
    <source>
        <dbReference type="HAMAP-Rule" id="MF_01394"/>
    </source>
</evidence>